<protein>
    <recommendedName>
        <fullName evidence="1">Putative N-acetylmannosamine-6-phosphate 2-epimerase</fullName>
        <ecNumber evidence="1">5.1.3.9</ecNumber>
    </recommendedName>
    <alternativeName>
        <fullName evidence="1">ManNAc-6-P epimerase</fullName>
    </alternativeName>
</protein>
<evidence type="ECO:0000255" key="1">
    <source>
        <dbReference type="HAMAP-Rule" id="MF_01235"/>
    </source>
</evidence>
<accession>A0AMC4</accession>
<dbReference type="EC" id="5.1.3.9" evidence="1"/>
<dbReference type="EMBL" id="AM263198">
    <property type="protein sequence ID" value="CAK22156.1"/>
    <property type="molecule type" value="Genomic_DNA"/>
</dbReference>
<dbReference type="RefSeq" id="WP_011703427.1">
    <property type="nucleotide sequence ID" value="NC_008555.1"/>
</dbReference>
<dbReference type="SMR" id="A0AMC4"/>
<dbReference type="STRING" id="386043.lwe2738"/>
<dbReference type="GeneID" id="61190660"/>
<dbReference type="KEGG" id="lwe:lwe2738"/>
<dbReference type="eggNOG" id="COG3010">
    <property type="taxonomic scope" value="Bacteria"/>
</dbReference>
<dbReference type="HOGENOM" id="CLU_086300_1_0_9"/>
<dbReference type="OrthoDB" id="9781704at2"/>
<dbReference type="UniPathway" id="UPA00629">
    <property type="reaction ID" value="UER00682"/>
</dbReference>
<dbReference type="Proteomes" id="UP000000779">
    <property type="component" value="Chromosome"/>
</dbReference>
<dbReference type="GO" id="GO:0005829">
    <property type="term" value="C:cytosol"/>
    <property type="evidence" value="ECO:0007669"/>
    <property type="project" value="TreeGrafter"/>
</dbReference>
<dbReference type="GO" id="GO:0047465">
    <property type="term" value="F:N-acylglucosamine-6-phosphate 2-epimerase activity"/>
    <property type="evidence" value="ECO:0007669"/>
    <property type="project" value="UniProtKB-EC"/>
</dbReference>
<dbReference type="GO" id="GO:0005975">
    <property type="term" value="P:carbohydrate metabolic process"/>
    <property type="evidence" value="ECO:0007669"/>
    <property type="project" value="UniProtKB-UniRule"/>
</dbReference>
<dbReference type="GO" id="GO:0006053">
    <property type="term" value="P:N-acetylmannosamine catabolic process"/>
    <property type="evidence" value="ECO:0007669"/>
    <property type="project" value="TreeGrafter"/>
</dbReference>
<dbReference type="GO" id="GO:0019262">
    <property type="term" value="P:N-acetylneuraminate catabolic process"/>
    <property type="evidence" value="ECO:0007669"/>
    <property type="project" value="UniProtKB-UniRule"/>
</dbReference>
<dbReference type="CDD" id="cd04729">
    <property type="entry name" value="NanE"/>
    <property type="match status" value="1"/>
</dbReference>
<dbReference type="FunFam" id="3.20.20.70:FF:000035">
    <property type="entry name" value="Putative N-acetylmannosamine-6-phosphate 2-epimerase"/>
    <property type="match status" value="1"/>
</dbReference>
<dbReference type="Gene3D" id="3.20.20.70">
    <property type="entry name" value="Aldolase class I"/>
    <property type="match status" value="1"/>
</dbReference>
<dbReference type="HAMAP" id="MF_01235">
    <property type="entry name" value="ManNAc6P_epimer"/>
    <property type="match status" value="1"/>
</dbReference>
<dbReference type="InterPro" id="IPR013785">
    <property type="entry name" value="Aldolase_TIM"/>
</dbReference>
<dbReference type="InterPro" id="IPR007260">
    <property type="entry name" value="NanE"/>
</dbReference>
<dbReference type="InterPro" id="IPR011060">
    <property type="entry name" value="RibuloseP-bd_barrel"/>
</dbReference>
<dbReference type="NCBIfam" id="NF002231">
    <property type="entry name" value="PRK01130.1"/>
    <property type="match status" value="1"/>
</dbReference>
<dbReference type="PANTHER" id="PTHR36204">
    <property type="entry name" value="N-ACETYLMANNOSAMINE-6-PHOSPHATE 2-EPIMERASE-RELATED"/>
    <property type="match status" value="1"/>
</dbReference>
<dbReference type="PANTHER" id="PTHR36204:SF1">
    <property type="entry name" value="N-ACETYLMANNOSAMINE-6-PHOSPHATE 2-EPIMERASE-RELATED"/>
    <property type="match status" value="1"/>
</dbReference>
<dbReference type="Pfam" id="PF04131">
    <property type="entry name" value="NanE"/>
    <property type="match status" value="1"/>
</dbReference>
<dbReference type="SUPFAM" id="SSF51366">
    <property type="entry name" value="Ribulose-phoshate binding barrel"/>
    <property type="match status" value="1"/>
</dbReference>
<proteinExistence type="inferred from homology"/>
<keyword id="KW-0119">Carbohydrate metabolism</keyword>
<keyword id="KW-0413">Isomerase</keyword>
<gene>
    <name evidence="1" type="primary">nanE</name>
    <name type="ordered locus">lwe2738</name>
</gene>
<name>NANE_LISW6</name>
<organism>
    <name type="scientific">Listeria welshimeri serovar 6b (strain ATCC 35897 / DSM 20650 / CCUG 15529 / CIP 8149 / NCTC 11857 / SLCC 5334 / V8)</name>
    <dbReference type="NCBI Taxonomy" id="386043"/>
    <lineage>
        <taxon>Bacteria</taxon>
        <taxon>Bacillati</taxon>
        <taxon>Bacillota</taxon>
        <taxon>Bacilli</taxon>
        <taxon>Bacillales</taxon>
        <taxon>Listeriaceae</taxon>
        <taxon>Listeria</taxon>
    </lineage>
</organism>
<reference key="1">
    <citation type="journal article" date="2006" name="J. Bacteriol.">
        <title>Whole-genome sequence of Listeria welshimeri reveals common steps in genome reduction with Listeria innocua as compared to Listeria monocytogenes.</title>
        <authorList>
            <person name="Hain T."/>
            <person name="Steinweg C."/>
            <person name="Kuenne C.T."/>
            <person name="Billion A."/>
            <person name="Ghai R."/>
            <person name="Chatterjee S.S."/>
            <person name="Domann E."/>
            <person name="Kaerst U."/>
            <person name="Goesmann A."/>
            <person name="Bekel T."/>
            <person name="Bartels D."/>
            <person name="Kaiser O."/>
            <person name="Meyer F."/>
            <person name="Puehler A."/>
            <person name="Weisshaar B."/>
            <person name="Wehland J."/>
            <person name="Liang C."/>
            <person name="Dandekar T."/>
            <person name="Lampidis R."/>
            <person name="Kreft J."/>
            <person name="Goebel W."/>
            <person name="Chakraborty T."/>
        </authorList>
    </citation>
    <scope>NUCLEOTIDE SEQUENCE [LARGE SCALE GENOMIC DNA]</scope>
    <source>
        <strain>ATCC 35897 / DSM 20650 / CCUG 15529 / CIP 8149 / NCTC 11857 / SLCC 5334 / V8</strain>
    </source>
</reference>
<comment type="function">
    <text evidence="1">Converts N-acetylmannosamine-6-phosphate (ManNAc-6-P) to N-acetylglucosamine-6-phosphate (GlcNAc-6-P).</text>
</comment>
<comment type="catalytic activity">
    <reaction evidence="1">
        <text>an N-acyl-D-glucosamine 6-phosphate = an N-acyl-D-mannosamine 6-phosphate</text>
        <dbReference type="Rhea" id="RHEA:23932"/>
        <dbReference type="ChEBI" id="CHEBI:57599"/>
        <dbReference type="ChEBI" id="CHEBI:57666"/>
        <dbReference type="EC" id="5.1.3.9"/>
    </reaction>
</comment>
<comment type="pathway">
    <text evidence="1">Amino-sugar metabolism; N-acetylneuraminate degradation; D-fructose 6-phosphate from N-acetylneuraminate: step 3/5.</text>
</comment>
<comment type="similarity">
    <text evidence="1">Belongs to the NanE family.</text>
</comment>
<sequence>MNNSVKEKIKGGLVVSCQALSNEPLHSSFIMSKMALAAVQSGAVGIRANTTKDIKAIEEQVDVPIIGIFKNEYEGSEVFITPTYKEVKEICESGAQIVAMDATTRLRPHGEKLDEIIKTVRKEFPNILLMADTSSLEDVKYADALGFDFIGTTLYGYTEATTGKNISDNQFAYLKEVLKSTTTPIIAEGKIDTPEKAREVLALGCYSVVVGGAITRPQEITKRFINEMKKDHLGKS</sequence>
<feature type="chain" id="PRO_0000301477" description="Putative N-acetylmannosamine-6-phosphate 2-epimerase">
    <location>
        <begin position="1"/>
        <end position="236"/>
    </location>
</feature>